<protein>
    <recommendedName>
        <fullName evidence="1">Chaperonin GroEL</fullName>
        <ecNumber evidence="1">5.6.1.7</ecNumber>
    </recommendedName>
    <alternativeName>
        <fullName evidence="1">60 kDa chaperonin</fullName>
    </alternativeName>
    <alternativeName>
        <fullName>65 kDa heat shock protein</fullName>
    </alternativeName>
    <alternativeName>
        <fullName evidence="1">Chaperonin-60</fullName>
        <shortName evidence="1">Cpn60</shortName>
    </alternativeName>
</protein>
<reference key="1">
    <citation type="journal article" date="1995" name="Arch. Pathol. Lab. Med.">
        <title>Rapid Mycobacterium species assignment and unambiguous identification of mutations associated with antimicrobial resistance in Mycobacterium tuberculosis by automated DNA sequencing.</title>
        <authorList>
            <person name="Kapur V."/>
            <person name="Li L.L."/>
            <person name="Hamrick M.R."/>
            <person name="Plikaytis B.B."/>
            <person name="Shinnick T.M."/>
            <person name="Telenti A."/>
            <person name="Jacobs W.R. Jr."/>
            <person name="Banerjee A."/>
            <person name="Cole S."/>
            <person name="Yuen K.Y."/>
            <person name="Clarridge J.E."/>
            <person name="Kreiswirth B.N."/>
            <person name="Musser J.M."/>
        </authorList>
    </citation>
    <scope>NUCLEOTIDE SEQUENCE [GENOMIC DNA]</scope>
    <source>
        <strain>210</strain>
        <strain>793</strain>
    </source>
</reference>
<name>CH60_MYCMA</name>
<feature type="chain" id="PRO_0000063438" description="Chaperonin GroEL">
    <location>
        <begin position="1" status="less than"/>
        <end position="120" status="greater than"/>
    </location>
</feature>
<feature type="binding site" evidence="1">
    <location>
        <begin position="23"/>
        <end position="27"/>
    </location>
    <ligand>
        <name>ATP</name>
        <dbReference type="ChEBI" id="CHEBI:30616"/>
    </ligand>
</feature>
<feature type="non-terminal residue">
    <location>
        <position position="1"/>
    </location>
</feature>
<feature type="non-terminal residue">
    <location>
        <position position="120"/>
    </location>
</feature>
<evidence type="ECO:0000255" key="1">
    <source>
        <dbReference type="HAMAP-Rule" id="MF_00600"/>
    </source>
</evidence>
<evidence type="ECO:0000305" key="2"/>
<sequence length="120" mass="12411">PYEKIGAELVKEVAKKTDDVAGDGTTTATVLAQALVKEGLRNVAAGANPLSLKRGIEKAVEKVTETLLKSAKEVETKEQIAATAAISAGDQSIGDLIAEAMDKVGNEGVITVEESNTFGL</sequence>
<organism>
    <name type="scientific">Mycobacterium malmoense</name>
    <dbReference type="NCBI Taxonomy" id="1780"/>
    <lineage>
        <taxon>Bacteria</taxon>
        <taxon>Bacillati</taxon>
        <taxon>Actinomycetota</taxon>
        <taxon>Actinomycetes</taxon>
        <taxon>Mycobacteriales</taxon>
        <taxon>Mycobacteriaceae</taxon>
        <taxon>Mycobacterium</taxon>
    </lineage>
</organism>
<keyword id="KW-0067">ATP-binding</keyword>
<keyword id="KW-0143">Chaperone</keyword>
<keyword id="KW-0963">Cytoplasm</keyword>
<keyword id="KW-0413">Isomerase</keyword>
<keyword id="KW-0547">Nucleotide-binding</keyword>
<keyword id="KW-0346">Stress response</keyword>
<dbReference type="EC" id="5.6.1.7" evidence="1"/>
<dbReference type="EMBL" id="U17948">
    <property type="protein sequence ID" value="AAB39067.1"/>
    <property type="molecule type" value="Genomic_DNA"/>
</dbReference>
<dbReference type="SMR" id="Q50212"/>
<dbReference type="STRING" id="1780.A5676_04180"/>
<dbReference type="GO" id="GO:0005737">
    <property type="term" value="C:cytoplasm"/>
    <property type="evidence" value="ECO:0007669"/>
    <property type="project" value="UniProtKB-SubCell"/>
</dbReference>
<dbReference type="GO" id="GO:0005524">
    <property type="term" value="F:ATP binding"/>
    <property type="evidence" value="ECO:0007669"/>
    <property type="project" value="UniProtKB-KW"/>
</dbReference>
<dbReference type="GO" id="GO:0140662">
    <property type="term" value="F:ATP-dependent protein folding chaperone"/>
    <property type="evidence" value="ECO:0007669"/>
    <property type="project" value="InterPro"/>
</dbReference>
<dbReference type="GO" id="GO:0016853">
    <property type="term" value="F:isomerase activity"/>
    <property type="evidence" value="ECO:0007669"/>
    <property type="project" value="UniProtKB-KW"/>
</dbReference>
<dbReference type="GO" id="GO:0042026">
    <property type="term" value="P:protein refolding"/>
    <property type="evidence" value="ECO:0007669"/>
    <property type="project" value="InterPro"/>
</dbReference>
<dbReference type="Gene3D" id="1.10.560.10">
    <property type="entry name" value="GroEL-like equatorial domain"/>
    <property type="match status" value="1"/>
</dbReference>
<dbReference type="Gene3D" id="3.30.260.10">
    <property type="entry name" value="TCP-1-like chaperonin intermediate domain"/>
    <property type="match status" value="1"/>
</dbReference>
<dbReference type="InterPro" id="IPR001844">
    <property type="entry name" value="Cpn60/GroEL"/>
</dbReference>
<dbReference type="InterPro" id="IPR002423">
    <property type="entry name" value="Cpn60/GroEL/TCP-1"/>
</dbReference>
<dbReference type="InterPro" id="IPR027413">
    <property type="entry name" value="GROEL-like_equatorial_sf"/>
</dbReference>
<dbReference type="InterPro" id="IPR027410">
    <property type="entry name" value="TCP-1-like_intermed_sf"/>
</dbReference>
<dbReference type="PANTHER" id="PTHR45633">
    <property type="entry name" value="60 KDA HEAT SHOCK PROTEIN, MITOCHONDRIAL"/>
    <property type="match status" value="1"/>
</dbReference>
<dbReference type="Pfam" id="PF00118">
    <property type="entry name" value="Cpn60_TCP1"/>
    <property type="match status" value="1"/>
</dbReference>
<dbReference type="SUPFAM" id="SSF48592">
    <property type="entry name" value="GroEL equatorial domain-like"/>
    <property type="match status" value="1"/>
</dbReference>
<proteinExistence type="inferred from homology"/>
<gene>
    <name evidence="1" type="primary">groEL</name>
    <name evidence="1" type="synonym">groL</name>
    <name type="synonym">mopA</name>
</gene>
<accession>Q50212</accession>
<comment type="function">
    <text evidence="1">Together with its co-chaperonin GroES, plays an essential role in assisting protein folding. The GroEL-GroES system forms a nano-cage that allows encapsulation of the non-native substrate proteins and provides a physical environment optimized to promote and accelerate protein folding.</text>
</comment>
<comment type="catalytic activity">
    <reaction evidence="1">
        <text>ATP + H2O + a folded polypeptide = ADP + phosphate + an unfolded polypeptide.</text>
        <dbReference type="EC" id="5.6.1.7"/>
    </reaction>
</comment>
<comment type="subunit">
    <text evidence="1">Forms a cylinder of 14 subunits composed of two heptameric rings stacked back-to-back. Interacts with the co-chaperonin GroES.</text>
</comment>
<comment type="subcellular location">
    <subcellularLocation>
        <location evidence="1">Cytoplasm</location>
    </subcellularLocation>
</comment>
<comment type="similarity">
    <text evidence="1 2">Belongs to the chaperonin (HSP60) family.</text>
</comment>